<evidence type="ECO:0000255" key="1">
    <source>
        <dbReference type="HAMAP-Rule" id="MF_01344"/>
    </source>
</evidence>
<keyword id="KW-0249">Electron transport</keyword>
<keyword id="KW-0472">Membrane</keyword>
<keyword id="KW-0602">Photosynthesis</keyword>
<keyword id="KW-0793">Thylakoid</keyword>
<keyword id="KW-0812">Transmembrane</keyword>
<keyword id="KW-1133">Transmembrane helix</keyword>
<keyword id="KW-0813">Transport</keyword>
<dbReference type="EMBL" id="CP001344">
    <property type="protein sequence ID" value="ACL44706.1"/>
    <property type="molecule type" value="Genomic_DNA"/>
</dbReference>
<dbReference type="SMR" id="B8HWC7"/>
<dbReference type="STRING" id="395961.Cyan7425_2348"/>
<dbReference type="KEGG" id="cyn:Cyan7425_2348"/>
<dbReference type="eggNOG" id="COG1290">
    <property type="taxonomic scope" value="Bacteria"/>
</dbReference>
<dbReference type="HOGENOM" id="CLU_112652_0_0_3"/>
<dbReference type="OrthoDB" id="529454at2"/>
<dbReference type="GO" id="GO:0031676">
    <property type="term" value="C:plasma membrane-derived thylakoid membrane"/>
    <property type="evidence" value="ECO:0007669"/>
    <property type="project" value="UniProtKB-SubCell"/>
</dbReference>
<dbReference type="GO" id="GO:0045158">
    <property type="term" value="F:electron transporter, transferring electrons within cytochrome b6/f complex of photosystem II activity"/>
    <property type="evidence" value="ECO:0007669"/>
    <property type="project" value="UniProtKB-UniRule"/>
</dbReference>
<dbReference type="GO" id="GO:0045156">
    <property type="term" value="F:electron transporter, transferring electrons within the cyclic electron transport pathway of photosynthesis activity"/>
    <property type="evidence" value="ECO:0007669"/>
    <property type="project" value="InterPro"/>
</dbReference>
<dbReference type="GO" id="GO:0016491">
    <property type="term" value="F:oxidoreductase activity"/>
    <property type="evidence" value="ECO:0007669"/>
    <property type="project" value="InterPro"/>
</dbReference>
<dbReference type="GO" id="GO:0009767">
    <property type="term" value="P:photosynthetic electron transport chain"/>
    <property type="evidence" value="ECO:0007669"/>
    <property type="project" value="InterPro"/>
</dbReference>
<dbReference type="CDD" id="cd00290">
    <property type="entry name" value="cytochrome_b_C"/>
    <property type="match status" value="1"/>
</dbReference>
<dbReference type="FunFam" id="1.10.287.980:FF:000001">
    <property type="entry name" value="Cytochrome b6-f complex subunit 4"/>
    <property type="match status" value="1"/>
</dbReference>
<dbReference type="FunFam" id="1.20.5.510:FF:000002">
    <property type="entry name" value="Cytochrome b6-f complex subunit 4"/>
    <property type="match status" value="1"/>
</dbReference>
<dbReference type="Gene3D" id="1.10.287.980">
    <property type="entry name" value="plastocyanin oxidoreductase"/>
    <property type="match status" value="1"/>
</dbReference>
<dbReference type="Gene3D" id="1.20.5.510">
    <property type="entry name" value="Single helix bin"/>
    <property type="match status" value="1"/>
</dbReference>
<dbReference type="HAMAP" id="MF_01344">
    <property type="entry name" value="Cytb6_f_subIV"/>
    <property type="match status" value="1"/>
</dbReference>
<dbReference type="InterPro" id="IPR005798">
    <property type="entry name" value="Cyt_b/b6_C"/>
</dbReference>
<dbReference type="InterPro" id="IPR036150">
    <property type="entry name" value="Cyt_b/b6_C_sf"/>
</dbReference>
<dbReference type="InterPro" id="IPR005870">
    <property type="entry name" value="Cyt_b6/f_cplx_suIV"/>
</dbReference>
<dbReference type="InterPro" id="IPR048260">
    <property type="entry name" value="Cytochrome_b_C_euk/bac"/>
</dbReference>
<dbReference type="NCBIfam" id="TIGR01156">
    <property type="entry name" value="cytb6_f_IV"/>
    <property type="match status" value="1"/>
</dbReference>
<dbReference type="PANTHER" id="PTHR19271">
    <property type="entry name" value="CYTOCHROME B"/>
    <property type="match status" value="1"/>
</dbReference>
<dbReference type="PANTHER" id="PTHR19271:SF16">
    <property type="entry name" value="CYTOCHROME B"/>
    <property type="match status" value="1"/>
</dbReference>
<dbReference type="Pfam" id="PF00032">
    <property type="entry name" value="Cytochrom_B_C"/>
    <property type="match status" value="1"/>
</dbReference>
<dbReference type="PIRSF" id="PIRSF000033">
    <property type="entry name" value="B6f_17K"/>
    <property type="match status" value="1"/>
</dbReference>
<dbReference type="SUPFAM" id="SSF81648">
    <property type="entry name" value="a domain/subunit of cytochrome bc1 complex (Ubiquinol-cytochrome c reductase)"/>
    <property type="match status" value="1"/>
</dbReference>
<dbReference type="PROSITE" id="PS51003">
    <property type="entry name" value="CYTB_CTER"/>
    <property type="match status" value="1"/>
</dbReference>
<sequence length="161" mass="17835">MAKVQKKPDLSDPKLKAMLKKGMGHNYYGEPAWPNDLLYIFPVVILGSIALCVGLAVLDPAMVGEPADPFATPLEILPEWYLYPVFQILRVVPNKLLGVVLMGSIPLGLMLVPFIENVNKFQNPFRRPVATTVFLFGTLFTLWLGIGATFPIDKSFTLGLF</sequence>
<feature type="chain" id="PRO_1000166452" description="Cytochrome b6-f complex subunit 4">
    <location>
        <begin position="1"/>
        <end position="161"/>
    </location>
</feature>
<feature type="transmembrane region" description="Helical" evidence="1">
    <location>
        <begin position="37"/>
        <end position="57"/>
    </location>
</feature>
<feature type="transmembrane region" description="Helical" evidence="1">
    <location>
        <begin position="96"/>
        <end position="116"/>
    </location>
</feature>
<feature type="transmembrane region" description="Helical" evidence="1">
    <location>
        <begin position="132"/>
        <end position="152"/>
    </location>
</feature>
<name>PETD_CYAP4</name>
<reference key="1">
    <citation type="journal article" date="2011" name="MBio">
        <title>Novel metabolic attributes of the genus Cyanothece, comprising a group of unicellular nitrogen-fixing Cyanobacteria.</title>
        <authorList>
            <person name="Bandyopadhyay A."/>
            <person name="Elvitigala T."/>
            <person name="Welsh E."/>
            <person name="Stockel J."/>
            <person name="Liberton M."/>
            <person name="Min H."/>
            <person name="Sherman L.A."/>
            <person name="Pakrasi H.B."/>
        </authorList>
    </citation>
    <scope>NUCLEOTIDE SEQUENCE [LARGE SCALE GENOMIC DNA]</scope>
    <source>
        <strain>PCC 7425 / ATCC 29141</strain>
    </source>
</reference>
<organism>
    <name type="scientific">Cyanothece sp. (strain PCC 7425 / ATCC 29141)</name>
    <dbReference type="NCBI Taxonomy" id="395961"/>
    <lineage>
        <taxon>Bacteria</taxon>
        <taxon>Bacillati</taxon>
        <taxon>Cyanobacteriota</taxon>
        <taxon>Cyanophyceae</taxon>
        <taxon>Gomontiellales</taxon>
        <taxon>Cyanothecaceae</taxon>
        <taxon>Cyanothece</taxon>
    </lineage>
</organism>
<comment type="function">
    <text evidence="1">Component of the cytochrome b6-f complex, which mediates electron transfer between photosystem II (PSII) and photosystem I (PSI), cyclic electron flow around PSI, and state transitions.</text>
</comment>
<comment type="subunit">
    <text evidence="1">The 4 large subunits of the cytochrome b6-f complex are cytochrome b6, subunit IV (17 kDa polypeptide, PetD), cytochrome f and the Rieske protein, while the 4 small subunits are PetG, PetL, PetM and PetN. The complex functions as a dimer.</text>
</comment>
<comment type="subcellular location">
    <subcellularLocation>
        <location evidence="1">Cellular thylakoid membrane</location>
        <topology evidence="1">Multi-pass membrane protein</topology>
    </subcellularLocation>
</comment>
<comment type="similarity">
    <text evidence="1">Belongs to the cytochrome b family. PetD subfamily.</text>
</comment>
<protein>
    <recommendedName>
        <fullName evidence="1">Cytochrome b6-f complex subunit 4</fullName>
    </recommendedName>
    <alternativeName>
        <fullName evidence="1">17 kDa polypeptide</fullName>
    </alternativeName>
</protein>
<gene>
    <name evidence="1" type="primary">petD</name>
    <name type="ordered locus">Cyan7425_2348</name>
</gene>
<proteinExistence type="inferred from homology"/>
<accession>B8HWC7</accession>